<sequence length="498" mass="53955">MRTNPTTSRPGVSTIEEKSTGRIDQIIGPVLDVTFPPGKLPYIYNALVVKSRDTDGKQINVTCEVQQLLGNNRVRAVAMSATDGLMRGMEVIDTGAPLSVPVGGATLGRIFNVLGEPVDNLGPVDTSATFPIHRSAPAFIELDTKLSIFETGIKVVDLLAPYRRGGKIGLFGGAGVGKTVLIMELINNIAKAHGGVSVFGGVGERTREGNDLYMEMKESGVINEKNLEESKVALVYGQMNEPPGARMRVGLTALTMAEYFRDVNKQDVLLFIDNIFRFVQAGSEVSALLGRMPSAVGYQPTLSTEMGSLQERITSTKKGSITSIQAVYVPADDLTDPAPATTFAHLDATTVLSRGLASKGIYPAVDPLDSTSTMLQPRIVGNEHYETAQRVKQTLQRYKELQDIIAILGLDELSEEDRLTVARARKIERFLSQPFFVAEVFTGSPGKYVGLAETIRGFQLILSGELDGLPEQAFYLVGNIDEASTKAINLEEENKLKK</sequence>
<gene>
    <name evidence="1" type="primary">atpB</name>
    <name type="ordered locus">LOC_Osp1g00410</name>
</gene>
<protein>
    <recommendedName>
        <fullName evidence="1">ATP synthase subunit beta, chloroplastic</fullName>
        <ecNumber evidence="1">7.1.2.2</ecNumber>
    </recommendedName>
    <alternativeName>
        <fullName evidence="1">ATP synthase F1 sector subunit beta</fullName>
    </alternativeName>
    <alternativeName>
        <fullName evidence="1">F-ATPase subunit beta</fullName>
    </alternativeName>
</protein>
<proteinExistence type="evidence at protein level"/>
<geneLocation type="chloroplast"/>
<comment type="function">
    <text evidence="1">Produces ATP from ADP in the presence of a proton gradient across the membrane. The catalytic sites are hosted primarily by the beta subunits.</text>
</comment>
<comment type="catalytic activity">
    <reaction evidence="1">
        <text>ATP + H2O + 4 H(+)(in) = ADP + phosphate + 5 H(+)(out)</text>
        <dbReference type="Rhea" id="RHEA:57720"/>
        <dbReference type="ChEBI" id="CHEBI:15377"/>
        <dbReference type="ChEBI" id="CHEBI:15378"/>
        <dbReference type="ChEBI" id="CHEBI:30616"/>
        <dbReference type="ChEBI" id="CHEBI:43474"/>
        <dbReference type="ChEBI" id="CHEBI:456216"/>
        <dbReference type="EC" id="7.1.2.2"/>
    </reaction>
</comment>
<comment type="subunit">
    <text evidence="1 2">F-type ATPases have 2 components, CF(1) - the catalytic core - and CF(0) - the membrane proton channel. CF(1) has five subunits: alpha(3), beta(3), gamma(1), delta(1), epsilon(1). CF(0) has four main subunits: a(1), b(1), b'(1) and c(9-12) (By similarity). Interacts with YL1 (PubMed:27585744).</text>
</comment>
<comment type="subcellular location">
    <subcellularLocation>
        <location evidence="1">Plastid</location>
        <location evidence="1">Chloroplast thylakoid membrane</location>
        <topology evidence="1">Peripheral membrane protein</topology>
    </subcellularLocation>
</comment>
<comment type="similarity">
    <text evidence="1">Belongs to the ATPase alpha/beta chains family.</text>
</comment>
<reference key="1">
    <citation type="journal article" date="1987" name="Nucleic Acids Res.">
        <title>Sequence of the chloroplast-encoded atpB-atpE-trnM gene clusters from rice.</title>
        <authorList>
            <person name="Moon E."/>
            <person name="Kao T.-H."/>
            <person name="Wu R."/>
        </authorList>
    </citation>
    <scope>NUCLEOTIDE SEQUENCE [GENOMIC DNA]</scope>
</reference>
<reference key="2">
    <citation type="journal article" date="1989" name="Jpn. J. Genet.">
        <title>The nucleotide sequences and expression of genes for the beta and epsilon subunits of ATP synthase from rice (Oryza sativa L.).</title>
        <authorList>
            <person name="Nishizawa Y."/>
            <person name="Hirai A."/>
        </authorList>
    </citation>
    <scope>NUCLEOTIDE SEQUENCE [GENOMIC DNA]</scope>
    <source>
        <strain>cv. Nipponbare</strain>
        <tissue>Leaf</tissue>
    </source>
</reference>
<reference key="3">
    <citation type="submission" date="2000-01" db="EMBL/GenBank/DDBJ databases">
        <title>Oryza sativa chloroplast ATP synthase beta subunit gene, mRNA.</title>
        <authorList>
            <person name="Wang T."/>
        </authorList>
    </citation>
    <scope>NUCLEOTIDE SEQUENCE [MRNA]</scope>
    <source>
        <strain>cv. Nongken 58S</strain>
        <tissue>Leaf</tissue>
    </source>
</reference>
<reference key="4">
    <citation type="journal article" date="1989" name="Mol. Gen. Genet.">
        <title>The complete sequence of the rice (Oryza sativa) chloroplast genome: intermolecular recombination between distinct tRNA genes accounts for a major plastid DNA inversion during the evolution of the cereals.</title>
        <authorList>
            <person name="Hiratsuka J."/>
            <person name="Shimada H."/>
            <person name="Whittier R."/>
            <person name="Ishibashi T."/>
            <person name="Sakamoto M."/>
            <person name="Mori M."/>
            <person name="Kondo C."/>
            <person name="Honji Y."/>
            <person name="Sun C.-R."/>
            <person name="Meng B.-Y."/>
            <person name="Li Y.-Q."/>
            <person name="Kanno A."/>
            <person name="Nishizawa Y."/>
            <person name="Hirai A."/>
            <person name="Shinozaki K."/>
            <person name="Sugiura M."/>
        </authorList>
    </citation>
    <scope>NUCLEOTIDE SEQUENCE [LARGE SCALE GENOMIC DNA]</scope>
    <source>
        <strain>cv. Nipponbare</strain>
    </source>
</reference>
<reference key="5">
    <citation type="journal article" date="2004" name="Plant Physiol.">
        <title>A comparison of rice chloroplast genomes.</title>
        <authorList>
            <person name="Tang J."/>
            <person name="Xia H."/>
            <person name="Cao M."/>
            <person name="Zhang X."/>
            <person name="Zeng W."/>
            <person name="Hu S."/>
            <person name="Tong W."/>
            <person name="Wang J."/>
            <person name="Wang J."/>
            <person name="Yu J."/>
            <person name="Yang H."/>
            <person name="Zhu L."/>
        </authorList>
    </citation>
    <scope>NUCLEOTIDE SEQUENCE [LARGE SCALE GENOMIC DNA]</scope>
    <source>
        <strain>cv. Nipponbare</strain>
    </source>
</reference>
<reference key="6">
    <citation type="journal article" date="2006" name="Proteomics">
        <title>Proteomic analysis of rice leaf, stem and root tissues during growth course.</title>
        <authorList>
            <person name="Nozu Y."/>
            <person name="Tsugita A."/>
            <person name="Kamijo K."/>
        </authorList>
    </citation>
    <scope>PROTEIN SEQUENCE [LARGE SCALE ANALYSIS] OF 1-7</scope>
    <scope>IDENTIFICATION BY MASS SPECTROMETRY</scope>
    <source>
        <strain>cv. Nipponbare</strain>
    </source>
</reference>
<reference key="7">
    <citation type="journal article" date="2016" name="Sci. Rep.">
        <title>A nucleus-encoded chloroplast protein YL1 is involved in chloroplast development and efficient biogenesis of chloroplast ATP synthase in rice.</title>
        <authorList>
            <person name="Chen F."/>
            <person name="Dong G."/>
            <person name="Wu L."/>
            <person name="Wang F."/>
            <person name="Yang X."/>
            <person name="Ma X."/>
            <person name="Wang H."/>
            <person name="Wu J."/>
            <person name="Zhang Y."/>
            <person name="Wang H."/>
            <person name="Qian Q."/>
            <person name="Yu Y."/>
        </authorList>
    </citation>
    <scope>INTERACTION WITH YL1</scope>
</reference>
<evidence type="ECO:0000255" key="1">
    <source>
        <dbReference type="HAMAP-Rule" id="MF_01347"/>
    </source>
</evidence>
<evidence type="ECO:0000269" key="2">
    <source>
    </source>
</evidence>
<evidence type="ECO:0000305" key="3"/>
<accession>P12085</accession>
<accession>Q9MVP6</accession>
<keyword id="KW-0066">ATP synthesis</keyword>
<keyword id="KW-0067">ATP-binding</keyword>
<keyword id="KW-0139">CF(1)</keyword>
<keyword id="KW-0150">Chloroplast</keyword>
<keyword id="KW-0903">Direct protein sequencing</keyword>
<keyword id="KW-0375">Hydrogen ion transport</keyword>
<keyword id="KW-0406">Ion transport</keyword>
<keyword id="KW-0472">Membrane</keyword>
<keyword id="KW-0547">Nucleotide-binding</keyword>
<keyword id="KW-0934">Plastid</keyword>
<keyword id="KW-1185">Reference proteome</keyword>
<keyword id="KW-0793">Thylakoid</keyword>
<keyword id="KW-1278">Translocase</keyword>
<keyword id="KW-0813">Transport</keyword>
<feature type="chain" id="PRO_0000144537" description="ATP synthase subunit beta, chloroplastic">
    <location>
        <begin position="1"/>
        <end position="498"/>
    </location>
</feature>
<feature type="binding site" evidence="1">
    <location>
        <begin position="172"/>
        <end position="179"/>
    </location>
    <ligand>
        <name>ATP</name>
        <dbReference type="ChEBI" id="CHEBI:30616"/>
    </ligand>
</feature>
<feature type="sequence conflict" description="In Ref. 2; BAA00334 and 4; CAA34003." evidence="3" ref="2 4">
    <original>P</original>
    <variation>R</variation>
    <location>
        <position position="37"/>
    </location>
</feature>
<feature type="sequence conflict" description="In Ref. 1; AAA84588." evidence="3" ref="1">
    <original>D</original>
    <variation>E</variation>
    <location>
        <position position="55"/>
    </location>
</feature>
<feature type="sequence conflict" description="In Ref. 3; BAA90397." evidence="3" ref="3">
    <original>G</original>
    <variation>V</variation>
    <location>
        <position position="95"/>
    </location>
</feature>
<feature type="sequence conflict" description="In Ref. 1; AAA84588." evidence="3" ref="1">
    <original>N</original>
    <variation>I</variation>
    <location>
        <position position="264"/>
    </location>
</feature>
<feature type="sequence conflict" description="In Ref. 1; AAA84588." evidence="3" ref="1">
    <original>K</original>
    <variation>N</variation>
    <location>
        <position position="495"/>
    </location>
</feature>
<dbReference type="EC" id="7.1.2.2" evidence="1"/>
<dbReference type="EMBL" id="M31464">
    <property type="protein sequence ID" value="AAA84588.1"/>
    <property type="molecule type" value="Genomic_DNA"/>
</dbReference>
<dbReference type="EMBL" id="D00432">
    <property type="protein sequence ID" value="BAA00334.1"/>
    <property type="molecule type" value="Genomic_DNA"/>
</dbReference>
<dbReference type="EMBL" id="AB037543">
    <property type="protein sequence ID" value="BAA90397.1"/>
    <property type="molecule type" value="mRNA"/>
</dbReference>
<dbReference type="EMBL" id="X15901">
    <property type="protein sequence ID" value="CAA34003.1"/>
    <property type="molecule type" value="Genomic_DNA"/>
</dbReference>
<dbReference type="EMBL" id="AY522330">
    <property type="status" value="NOT_ANNOTATED_CDS"/>
    <property type="molecule type" value="Genomic_DNA"/>
</dbReference>
<dbReference type="PIR" id="JQ0230">
    <property type="entry name" value="PWRZB"/>
</dbReference>
<dbReference type="RefSeq" id="NP_039390.1">
    <property type="nucleotide sequence ID" value="NC_001320.1"/>
</dbReference>
<dbReference type="SMR" id="P12085"/>
<dbReference type="BioGRID" id="792830">
    <property type="interactions" value="1"/>
</dbReference>
<dbReference type="FunCoup" id="P12085">
    <property type="interactions" value="338"/>
</dbReference>
<dbReference type="STRING" id="39947.P12085"/>
<dbReference type="PaxDb" id="39947-P12085"/>
<dbReference type="GeneID" id="3131462"/>
<dbReference type="KEGG" id="dosa:CAA34003.1"/>
<dbReference type="KEGG" id="osa:3131462"/>
<dbReference type="eggNOG" id="KOG1350">
    <property type="taxonomic scope" value="Eukaryota"/>
</dbReference>
<dbReference type="HOGENOM" id="CLU_022398_0_3_1"/>
<dbReference type="InParanoid" id="P12085"/>
<dbReference type="OrthoDB" id="651731at2759"/>
<dbReference type="Proteomes" id="UP000059680">
    <property type="component" value="Chloroplast"/>
</dbReference>
<dbReference type="GO" id="GO:0009535">
    <property type="term" value="C:chloroplast thylakoid membrane"/>
    <property type="evidence" value="ECO:0007669"/>
    <property type="project" value="UniProtKB-SubCell"/>
</dbReference>
<dbReference type="GO" id="GO:0005739">
    <property type="term" value="C:mitochondrion"/>
    <property type="evidence" value="ECO:0007669"/>
    <property type="project" value="GOC"/>
</dbReference>
<dbReference type="GO" id="GO:0009536">
    <property type="term" value="C:plastid"/>
    <property type="evidence" value="ECO:0000250"/>
    <property type="project" value="Gramene"/>
</dbReference>
<dbReference type="GO" id="GO:0045259">
    <property type="term" value="C:proton-transporting ATP synthase complex"/>
    <property type="evidence" value="ECO:0007669"/>
    <property type="project" value="UniProtKB-KW"/>
</dbReference>
<dbReference type="GO" id="GO:0005524">
    <property type="term" value="F:ATP binding"/>
    <property type="evidence" value="ECO:0007669"/>
    <property type="project" value="UniProtKB-UniRule"/>
</dbReference>
<dbReference type="GO" id="GO:0016887">
    <property type="term" value="F:ATP hydrolysis activity"/>
    <property type="evidence" value="ECO:0007669"/>
    <property type="project" value="InterPro"/>
</dbReference>
<dbReference type="GO" id="GO:0046933">
    <property type="term" value="F:proton-transporting ATP synthase activity, rotational mechanism"/>
    <property type="evidence" value="ECO:0007669"/>
    <property type="project" value="UniProtKB-UniRule"/>
</dbReference>
<dbReference type="GO" id="GO:0042776">
    <property type="term" value="P:proton motive force-driven mitochondrial ATP synthesis"/>
    <property type="evidence" value="ECO:0000318"/>
    <property type="project" value="GO_Central"/>
</dbReference>
<dbReference type="CDD" id="cd18110">
    <property type="entry name" value="ATP-synt_F1_beta_C"/>
    <property type="match status" value="1"/>
</dbReference>
<dbReference type="CDD" id="cd18115">
    <property type="entry name" value="ATP-synt_F1_beta_N"/>
    <property type="match status" value="1"/>
</dbReference>
<dbReference type="CDD" id="cd01133">
    <property type="entry name" value="F1-ATPase_beta_CD"/>
    <property type="match status" value="1"/>
</dbReference>
<dbReference type="FunFam" id="1.10.1140.10:FF:000001">
    <property type="entry name" value="ATP synthase subunit beta"/>
    <property type="match status" value="1"/>
</dbReference>
<dbReference type="FunFam" id="3.40.50.12240:FF:000006">
    <property type="entry name" value="ATP synthase subunit beta"/>
    <property type="match status" value="1"/>
</dbReference>
<dbReference type="FunFam" id="3.40.50.300:FF:000026">
    <property type="entry name" value="ATP synthase subunit beta"/>
    <property type="match status" value="1"/>
</dbReference>
<dbReference type="FunFam" id="2.40.10.170:FF:000002">
    <property type="entry name" value="ATP synthase subunit beta, chloroplastic"/>
    <property type="match status" value="1"/>
</dbReference>
<dbReference type="Gene3D" id="2.40.10.170">
    <property type="match status" value="1"/>
</dbReference>
<dbReference type="Gene3D" id="1.10.1140.10">
    <property type="entry name" value="Bovine Mitochondrial F1-atpase, Atp Synthase Beta Chain, Chain D, domain 3"/>
    <property type="match status" value="1"/>
</dbReference>
<dbReference type="Gene3D" id="3.40.50.300">
    <property type="entry name" value="P-loop containing nucleotide triphosphate hydrolases"/>
    <property type="match status" value="1"/>
</dbReference>
<dbReference type="HAMAP" id="MF_01347">
    <property type="entry name" value="ATP_synth_beta_bact"/>
    <property type="match status" value="1"/>
</dbReference>
<dbReference type="InterPro" id="IPR003593">
    <property type="entry name" value="AAA+_ATPase"/>
</dbReference>
<dbReference type="InterPro" id="IPR055190">
    <property type="entry name" value="ATP-synt_VA_C"/>
</dbReference>
<dbReference type="InterPro" id="IPR005722">
    <property type="entry name" value="ATP_synth_F1_bsu"/>
</dbReference>
<dbReference type="InterPro" id="IPR020003">
    <property type="entry name" value="ATPase_a/bsu_AS"/>
</dbReference>
<dbReference type="InterPro" id="IPR050053">
    <property type="entry name" value="ATPase_alpha/beta_chains"/>
</dbReference>
<dbReference type="InterPro" id="IPR004100">
    <property type="entry name" value="ATPase_F1/V1/A1_a/bsu_N"/>
</dbReference>
<dbReference type="InterPro" id="IPR036121">
    <property type="entry name" value="ATPase_F1/V1/A1_a/bsu_N_sf"/>
</dbReference>
<dbReference type="InterPro" id="IPR000194">
    <property type="entry name" value="ATPase_F1/V1/A1_a/bsu_nucl-bd"/>
</dbReference>
<dbReference type="InterPro" id="IPR024034">
    <property type="entry name" value="ATPase_F1/V1_b/a_C"/>
</dbReference>
<dbReference type="InterPro" id="IPR027417">
    <property type="entry name" value="P-loop_NTPase"/>
</dbReference>
<dbReference type="NCBIfam" id="TIGR01039">
    <property type="entry name" value="atpD"/>
    <property type="match status" value="1"/>
</dbReference>
<dbReference type="PANTHER" id="PTHR15184">
    <property type="entry name" value="ATP SYNTHASE"/>
    <property type="match status" value="1"/>
</dbReference>
<dbReference type="PANTHER" id="PTHR15184:SF71">
    <property type="entry name" value="ATP SYNTHASE SUBUNIT BETA, MITOCHONDRIAL"/>
    <property type="match status" value="1"/>
</dbReference>
<dbReference type="Pfam" id="PF00006">
    <property type="entry name" value="ATP-synt_ab"/>
    <property type="match status" value="1"/>
</dbReference>
<dbReference type="Pfam" id="PF02874">
    <property type="entry name" value="ATP-synt_ab_N"/>
    <property type="match status" value="1"/>
</dbReference>
<dbReference type="Pfam" id="PF22919">
    <property type="entry name" value="ATP-synt_VA_C"/>
    <property type="match status" value="1"/>
</dbReference>
<dbReference type="SMART" id="SM00382">
    <property type="entry name" value="AAA"/>
    <property type="match status" value="1"/>
</dbReference>
<dbReference type="SUPFAM" id="SSF47917">
    <property type="entry name" value="C-terminal domain of alpha and beta subunits of F1 ATP synthase"/>
    <property type="match status" value="1"/>
</dbReference>
<dbReference type="SUPFAM" id="SSF50615">
    <property type="entry name" value="N-terminal domain of alpha and beta subunits of F1 ATP synthase"/>
    <property type="match status" value="1"/>
</dbReference>
<dbReference type="SUPFAM" id="SSF52540">
    <property type="entry name" value="P-loop containing nucleoside triphosphate hydrolases"/>
    <property type="match status" value="1"/>
</dbReference>
<dbReference type="PROSITE" id="PS00152">
    <property type="entry name" value="ATPASE_ALPHA_BETA"/>
    <property type="match status" value="1"/>
</dbReference>
<organism>
    <name type="scientific">Oryza sativa subsp. japonica</name>
    <name type="common">Rice</name>
    <dbReference type="NCBI Taxonomy" id="39947"/>
    <lineage>
        <taxon>Eukaryota</taxon>
        <taxon>Viridiplantae</taxon>
        <taxon>Streptophyta</taxon>
        <taxon>Embryophyta</taxon>
        <taxon>Tracheophyta</taxon>
        <taxon>Spermatophyta</taxon>
        <taxon>Magnoliopsida</taxon>
        <taxon>Liliopsida</taxon>
        <taxon>Poales</taxon>
        <taxon>Poaceae</taxon>
        <taxon>BOP clade</taxon>
        <taxon>Oryzoideae</taxon>
        <taxon>Oryzeae</taxon>
        <taxon>Oryzinae</taxon>
        <taxon>Oryza</taxon>
        <taxon>Oryza sativa</taxon>
    </lineage>
</organism>
<name>ATPB_ORYSJ</name>